<sequence length="37" mass="4393">MKVRPSVKKMCDKCRLIKRKGTLRVICQNPKHKQRQG</sequence>
<organism>
    <name type="scientific">Chlorella vulgaris</name>
    <name type="common">Green alga</name>
    <dbReference type="NCBI Taxonomy" id="3077"/>
    <lineage>
        <taxon>Eukaryota</taxon>
        <taxon>Viridiplantae</taxon>
        <taxon>Chlorophyta</taxon>
        <taxon>core chlorophytes</taxon>
        <taxon>Trebouxiophyceae</taxon>
        <taxon>Chlorellales</taxon>
        <taxon>Chlorellaceae</taxon>
        <taxon>Chlorella clade</taxon>
        <taxon>Chlorella</taxon>
    </lineage>
</organism>
<feature type="chain" id="PRO_0000126316" description="Large ribosomal subunit protein bL36c">
    <location>
        <begin position="1"/>
        <end position="37"/>
    </location>
</feature>
<evidence type="ECO:0000305" key="1"/>
<keyword id="KW-0150">Chloroplast</keyword>
<keyword id="KW-0934">Plastid</keyword>
<keyword id="KW-0687">Ribonucleoprotein</keyword>
<keyword id="KW-0689">Ribosomal protein</keyword>
<gene>
    <name type="primary">rpl36</name>
</gene>
<protein>
    <recommendedName>
        <fullName evidence="1">Large ribosomal subunit protein bL36c</fullName>
    </recommendedName>
    <alternativeName>
        <fullName>50S ribosomal protein L36, chloroplastic</fullName>
    </alternativeName>
</protein>
<dbReference type="EMBL" id="AB001684">
    <property type="protein sequence ID" value="BAA57999.1"/>
    <property type="molecule type" value="Genomic_DNA"/>
</dbReference>
<dbReference type="PIR" id="T07351">
    <property type="entry name" value="T07351"/>
</dbReference>
<dbReference type="RefSeq" id="NP_045923.1">
    <property type="nucleotide sequence ID" value="NC_001865.1"/>
</dbReference>
<dbReference type="SMR" id="P56360"/>
<dbReference type="GeneID" id="809103"/>
<dbReference type="OrthoDB" id="10265903at2759"/>
<dbReference type="GO" id="GO:0009507">
    <property type="term" value="C:chloroplast"/>
    <property type="evidence" value="ECO:0007669"/>
    <property type="project" value="UniProtKB-SubCell"/>
</dbReference>
<dbReference type="GO" id="GO:1990904">
    <property type="term" value="C:ribonucleoprotein complex"/>
    <property type="evidence" value="ECO:0007669"/>
    <property type="project" value="UniProtKB-KW"/>
</dbReference>
<dbReference type="GO" id="GO:0005840">
    <property type="term" value="C:ribosome"/>
    <property type="evidence" value="ECO:0007669"/>
    <property type="project" value="UniProtKB-KW"/>
</dbReference>
<dbReference type="GO" id="GO:0003735">
    <property type="term" value="F:structural constituent of ribosome"/>
    <property type="evidence" value="ECO:0007669"/>
    <property type="project" value="InterPro"/>
</dbReference>
<dbReference type="GO" id="GO:0006412">
    <property type="term" value="P:translation"/>
    <property type="evidence" value="ECO:0007669"/>
    <property type="project" value="UniProtKB-UniRule"/>
</dbReference>
<dbReference type="HAMAP" id="MF_00251">
    <property type="entry name" value="Ribosomal_bL36"/>
    <property type="match status" value="1"/>
</dbReference>
<dbReference type="InterPro" id="IPR000473">
    <property type="entry name" value="Ribosomal_bL36"/>
</dbReference>
<dbReference type="InterPro" id="IPR035977">
    <property type="entry name" value="Ribosomal_bL36_sp"/>
</dbReference>
<dbReference type="NCBIfam" id="TIGR01022">
    <property type="entry name" value="rpmJ_bact"/>
    <property type="match status" value="1"/>
</dbReference>
<dbReference type="PANTHER" id="PTHR42888">
    <property type="entry name" value="50S RIBOSOMAL PROTEIN L36, CHLOROPLASTIC"/>
    <property type="match status" value="1"/>
</dbReference>
<dbReference type="PANTHER" id="PTHR42888:SF1">
    <property type="entry name" value="LARGE RIBOSOMAL SUBUNIT PROTEIN BL36C"/>
    <property type="match status" value="1"/>
</dbReference>
<dbReference type="Pfam" id="PF00444">
    <property type="entry name" value="Ribosomal_L36"/>
    <property type="match status" value="1"/>
</dbReference>
<dbReference type="SUPFAM" id="SSF57840">
    <property type="entry name" value="Ribosomal protein L36"/>
    <property type="match status" value="1"/>
</dbReference>
<dbReference type="PROSITE" id="PS00828">
    <property type="entry name" value="RIBOSOMAL_L36"/>
    <property type="match status" value="1"/>
</dbReference>
<name>RK36_CHLVU</name>
<comment type="subcellular location">
    <subcellularLocation>
        <location>Plastid</location>
        <location>Chloroplast</location>
    </subcellularLocation>
</comment>
<comment type="similarity">
    <text evidence="1">Belongs to the bacterial ribosomal protein bL36 family.</text>
</comment>
<geneLocation type="chloroplast"/>
<accession>P56360</accession>
<reference key="1">
    <citation type="journal article" date="1997" name="Proc. Natl. Acad. Sci. U.S.A.">
        <title>Complete nucleotide sequence of the chloroplast genome from the green alga Chlorella vulgaris: the existence of genes possibly involved in chloroplast division.</title>
        <authorList>
            <person name="Wakasugi T."/>
            <person name="Nagai T."/>
            <person name="Kapoor M."/>
            <person name="Sugita M."/>
            <person name="Ito M."/>
            <person name="Ito S."/>
            <person name="Tsudzuki J."/>
            <person name="Nakashima K."/>
            <person name="Tsudzuki T."/>
            <person name="Suzuki Y."/>
            <person name="Hamada A."/>
            <person name="Ohta T."/>
            <person name="Inamura A."/>
            <person name="Yoshinaga K."/>
            <person name="Sugiura M."/>
        </authorList>
    </citation>
    <scope>NUCLEOTIDE SEQUENCE [LARGE SCALE GENOMIC DNA]</scope>
    <source>
        <strain>IAM C-27 / Tamiya</strain>
    </source>
</reference>
<proteinExistence type="inferred from homology"/>